<accession>P13195</accession>
<accession>Q6P782</accession>
<dbReference type="EC" id="2.3.1.37" evidence="2"/>
<dbReference type="EMBL" id="J03190">
    <property type="protein sequence ID" value="AAA40790.1"/>
    <property type="molecule type" value="mRNA"/>
</dbReference>
<dbReference type="EMBL" id="J04044">
    <property type="protein sequence ID" value="AAA40724.1"/>
    <property type="molecule type" value="mRNA"/>
</dbReference>
<dbReference type="EMBL" id="BC061793">
    <property type="protein sequence ID" value="AAH61793.1"/>
    <property type="molecule type" value="mRNA"/>
</dbReference>
<dbReference type="PIR" id="A28191">
    <property type="entry name" value="SYRTAL"/>
</dbReference>
<dbReference type="RefSeq" id="NP_077810.2">
    <property type="nucleotide sequence ID" value="NM_024484.2"/>
</dbReference>
<dbReference type="SMR" id="P13195"/>
<dbReference type="FunCoup" id="P13195">
    <property type="interactions" value="835"/>
</dbReference>
<dbReference type="STRING" id="10116.ENSRNOP00000074873"/>
<dbReference type="GlyGen" id="P13195">
    <property type="glycosylation" value="1 site"/>
</dbReference>
<dbReference type="PhosphoSitePlus" id="P13195"/>
<dbReference type="PaxDb" id="10116-ENSRNOP00000065087"/>
<dbReference type="GeneID" id="65155"/>
<dbReference type="KEGG" id="rno:65155"/>
<dbReference type="AGR" id="RGD:68392"/>
<dbReference type="CTD" id="211"/>
<dbReference type="RGD" id="68392">
    <property type="gene designation" value="Alas1"/>
</dbReference>
<dbReference type="eggNOG" id="KOG1360">
    <property type="taxonomic scope" value="Eukaryota"/>
</dbReference>
<dbReference type="InParanoid" id="P13195"/>
<dbReference type="OrthoDB" id="10263824at2759"/>
<dbReference type="PhylomeDB" id="P13195"/>
<dbReference type="Reactome" id="R-RNO-189451">
    <property type="pathway name" value="Heme biosynthesis"/>
</dbReference>
<dbReference type="Reactome" id="R-RNO-9837999">
    <property type="pathway name" value="Mitochondrial protein degradation"/>
</dbReference>
<dbReference type="UniPathway" id="UPA00251">
    <property type="reaction ID" value="UER00375"/>
</dbReference>
<dbReference type="PRO" id="PR:P13195"/>
<dbReference type="Proteomes" id="UP000002494">
    <property type="component" value="Unplaced"/>
</dbReference>
<dbReference type="GO" id="GO:0005829">
    <property type="term" value="C:cytosol"/>
    <property type="evidence" value="ECO:0007669"/>
    <property type="project" value="Ensembl"/>
</dbReference>
<dbReference type="GO" id="GO:0005743">
    <property type="term" value="C:mitochondrial inner membrane"/>
    <property type="evidence" value="ECO:0007669"/>
    <property type="project" value="UniProtKB-SubCell"/>
</dbReference>
<dbReference type="GO" id="GO:0005759">
    <property type="term" value="C:mitochondrial matrix"/>
    <property type="evidence" value="ECO:0000266"/>
    <property type="project" value="RGD"/>
</dbReference>
<dbReference type="GO" id="GO:0005739">
    <property type="term" value="C:mitochondrion"/>
    <property type="evidence" value="ECO:0000318"/>
    <property type="project" value="GO_Central"/>
</dbReference>
<dbReference type="GO" id="GO:0005654">
    <property type="term" value="C:nucleoplasm"/>
    <property type="evidence" value="ECO:0007669"/>
    <property type="project" value="Ensembl"/>
</dbReference>
<dbReference type="GO" id="GO:0003870">
    <property type="term" value="F:5-aminolevulinate synthase activity"/>
    <property type="evidence" value="ECO:0000314"/>
    <property type="project" value="RGD"/>
</dbReference>
<dbReference type="GO" id="GO:0042802">
    <property type="term" value="F:identical protein binding"/>
    <property type="evidence" value="ECO:0000266"/>
    <property type="project" value="RGD"/>
</dbReference>
<dbReference type="GO" id="GO:0030170">
    <property type="term" value="F:pyridoxal phosphate binding"/>
    <property type="evidence" value="ECO:0007669"/>
    <property type="project" value="InterPro"/>
</dbReference>
<dbReference type="GO" id="GO:0032869">
    <property type="term" value="P:cellular response to insulin stimulus"/>
    <property type="evidence" value="ECO:0000270"/>
    <property type="project" value="RGD"/>
</dbReference>
<dbReference type="GO" id="GO:0048821">
    <property type="term" value="P:erythrocyte development"/>
    <property type="evidence" value="ECO:0000318"/>
    <property type="project" value="GO_Central"/>
</dbReference>
<dbReference type="GO" id="GO:0006784">
    <property type="term" value="P:heme A biosynthetic process"/>
    <property type="evidence" value="ECO:0000266"/>
    <property type="project" value="RGD"/>
</dbReference>
<dbReference type="GO" id="GO:0006785">
    <property type="term" value="P:heme B biosynthetic process"/>
    <property type="evidence" value="ECO:0000266"/>
    <property type="project" value="RGD"/>
</dbReference>
<dbReference type="GO" id="GO:0006783">
    <property type="term" value="P:heme biosynthetic process"/>
    <property type="evidence" value="ECO:0000318"/>
    <property type="project" value="GO_Central"/>
</dbReference>
<dbReference type="GO" id="GO:0048034">
    <property type="term" value="P:heme O biosynthetic process"/>
    <property type="evidence" value="ECO:0000266"/>
    <property type="project" value="RGD"/>
</dbReference>
<dbReference type="GO" id="GO:0042541">
    <property type="term" value="P:hemoglobin biosynthetic process"/>
    <property type="evidence" value="ECO:0000318"/>
    <property type="project" value="GO_Central"/>
</dbReference>
<dbReference type="GO" id="GO:0006782">
    <property type="term" value="P:protoporphyrinogen IX biosynthetic process"/>
    <property type="evidence" value="ECO:0007669"/>
    <property type="project" value="UniProtKB-UniPathway"/>
</dbReference>
<dbReference type="GO" id="GO:1903412">
    <property type="term" value="P:response to bile acid"/>
    <property type="evidence" value="ECO:0000250"/>
    <property type="project" value="UniProtKB"/>
</dbReference>
<dbReference type="GO" id="GO:0051591">
    <property type="term" value="P:response to cAMP"/>
    <property type="evidence" value="ECO:0000270"/>
    <property type="project" value="RGD"/>
</dbReference>
<dbReference type="GO" id="GO:0032025">
    <property type="term" value="P:response to cobalt ion"/>
    <property type="evidence" value="ECO:0000270"/>
    <property type="project" value="RGD"/>
</dbReference>
<dbReference type="GO" id="GO:0045471">
    <property type="term" value="P:response to ethanol"/>
    <property type="evidence" value="ECO:0000270"/>
    <property type="project" value="RGD"/>
</dbReference>
<dbReference type="GO" id="GO:0034698">
    <property type="term" value="P:response to gonadotropin"/>
    <property type="evidence" value="ECO:0000270"/>
    <property type="project" value="RGD"/>
</dbReference>
<dbReference type="GO" id="GO:0009635">
    <property type="term" value="P:response to herbicide"/>
    <property type="evidence" value="ECO:0000270"/>
    <property type="project" value="RGD"/>
</dbReference>
<dbReference type="GO" id="GO:0001666">
    <property type="term" value="P:response to hypoxia"/>
    <property type="evidence" value="ECO:0000270"/>
    <property type="project" value="RGD"/>
</dbReference>
<dbReference type="GO" id="GO:0010045">
    <property type="term" value="P:response to nickel cation"/>
    <property type="evidence" value="ECO:0000270"/>
    <property type="project" value="RGD"/>
</dbReference>
<dbReference type="GO" id="GO:0031667">
    <property type="term" value="P:response to nutrient levels"/>
    <property type="evidence" value="ECO:0000270"/>
    <property type="project" value="RGD"/>
</dbReference>
<dbReference type="GO" id="GO:0070541">
    <property type="term" value="P:response to platinum ion"/>
    <property type="evidence" value="ECO:0000270"/>
    <property type="project" value="RGD"/>
</dbReference>
<dbReference type="GO" id="GO:0009410">
    <property type="term" value="P:response to xenobiotic stimulus"/>
    <property type="evidence" value="ECO:0000270"/>
    <property type="project" value="RGD"/>
</dbReference>
<dbReference type="CDD" id="cd06454">
    <property type="entry name" value="KBL_like"/>
    <property type="match status" value="1"/>
</dbReference>
<dbReference type="FunFam" id="3.90.1150.10:FF:000045">
    <property type="entry name" value="5-aminolevulinate synthase"/>
    <property type="match status" value="1"/>
</dbReference>
<dbReference type="FunFam" id="3.40.640.10:FF:000006">
    <property type="entry name" value="5-aminolevulinate synthase, mitochondrial"/>
    <property type="match status" value="1"/>
</dbReference>
<dbReference type="Gene3D" id="3.90.1150.10">
    <property type="entry name" value="Aspartate Aminotransferase, domain 1"/>
    <property type="match status" value="1"/>
</dbReference>
<dbReference type="Gene3D" id="3.40.640.10">
    <property type="entry name" value="Type I PLP-dependent aspartate aminotransferase-like (Major domain)"/>
    <property type="match status" value="1"/>
</dbReference>
<dbReference type="InterPro" id="IPR010961">
    <property type="entry name" value="4pyrrol_synth_NH2levulA_synth"/>
</dbReference>
<dbReference type="InterPro" id="IPR015118">
    <property type="entry name" value="5aminolev_synth_preseq"/>
</dbReference>
<dbReference type="InterPro" id="IPR001917">
    <property type="entry name" value="Aminotrans_II_pyridoxalP_BS"/>
</dbReference>
<dbReference type="InterPro" id="IPR004839">
    <property type="entry name" value="Aminotransferase_I/II_large"/>
</dbReference>
<dbReference type="InterPro" id="IPR050087">
    <property type="entry name" value="AON_synthase_class-II"/>
</dbReference>
<dbReference type="InterPro" id="IPR015424">
    <property type="entry name" value="PyrdxlP-dep_Trfase"/>
</dbReference>
<dbReference type="InterPro" id="IPR015421">
    <property type="entry name" value="PyrdxlP-dep_Trfase_major"/>
</dbReference>
<dbReference type="InterPro" id="IPR015422">
    <property type="entry name" value="PyrdxlP-dep_Trfase_small"/>
</dbReference>
<dbReference type="NCBIfam" id="TIGR01821">
    <property type="entry name" value="5aminolev_synth"/>
    <property type="match status" value="1"/>
</dbReference>
<dbReference type="PANTHER" id="PTHR13693:SF50">
    <property type="entry name" value="5-AMINOLEVULINATE SYNTHASE, NON-SPECIFIC, MITOCHONDRIAL"/>
    <property type="match status" value="1"/>
</dbReference>
<dbReference type="PANTHER" id="PTHR13693">
    <property type="entry name" value="CLASS II AMINOTRANSFERASE/8-AMINO-7-OXONONANOATE SYNTHASE"/>
    <property type="match status" value="1"/>
</dbReference>
<dbReference type="Pfam" id="PF00155">
    <property type="entry name" value="Aminotran_1_2"/>
    <property type="match status" value="1"/>
</dbReference>
<dbReference type="Pfam" id="PF09029">
    <property type="entry name" value="Preseq_ALAS"/>
    <property type="match status" value="1"/>
</dbReference>
<dbReference type="SUPFAM" id="SSF53383">
    <property type="entry name" value="PLP-dependent transferases"/>
    <property type="match status" value="1"/>
</dbReference>
<dbReference type="PROSITE" id="PS00599">
    <property type="entry name" value="AA_TRANSFER_CLASS_2"/>
    <property type="match status" value="1"/>
</dbReference>
<keyword id="KW-0012">Acyltransferase</keyword>
<keyword id="KW-0350">Heme biosynthesis</keyword>
<keyword id="KW-0379">Hydroxylation</keyword>
<keyword id="KW-0472">Membrane</keyword>
<keyword id="KW-0496">Mitochondrion</keyword>
<keyword id="KW-0999">Mitochondrion inner membrane</keyword>
<keyword id="KW-0663">Pyridoxal phosphate</keyword>
<keyword id="KW-1185">Reference proteome</keyword>
<keyword id="KW-0808">Transferase</keyword>
<keyword id="KW-0809">Transit peptide</keyword>
<keyword id="KW-0832">Ubl conjugation</keyword>
<reference key="1">
    <citation type="journal article" date="1988" name="J. Biol. Chem.">
        <title>Regulation of 5-aminolevulinate synthase mRNA in different rat tissues.</title>
        <authorList>
            <person name="Srivastava G."/>
            <person name="Borthwick I.A."/>
            <person name="Maguire D.J."/>
            <person name="Elferink C.J."/>
            <person name="Bawden M.J."/>
            <person name="Mercer J.F.B."/>
            <person name="May B.K."/>
        </authorList>
    </citation>
    <scope>NUCLEOTIDE SEQUENCE [MRNA]</scope>
    <scope>TISSUE SPECIFICITY</scope>
    <scope>INDUCTION</scope>
    <source>
        <tissue>Liver</tissue>
    </source>
</reference>
<reference key="2">
    <citation type="journal article" date="1988" name="J. Biol. Chem.">
        <title>Structure, turnover, and heme-mediated suppression of the level of mRNA encoding rat liver delta-aminolevulinate synthase.</title>
        <authorList>
            <person name="Yamamoto M."/>
            <person name="Kure S."/>
            <person name="Engel J.D."/>
            <person name="Hiraga K."/>
        </authorList>
    </citation>
    <scope>NUCLEOTIDE SEQUENCE [MRNA]</scope>
    <scope>INDUCTION</scope>
    <source>
        <tissue>Liver</tissue>
    </source>
</reference>
<reference key="3">
    <citation type="journal article" date="2004" name="Genome Res.">
        <title>The status, quality, and expansion of the NIH full-length cDNA project: the Mammalian Gene Collection (MGC).</title>
        <authorList>
            <consortium name="The MGC Project Team"/>
        </authorList>
    </citation>
    <scope>NUCLEOTIDE SEQUENCE [LARGE SCALE MRNA]</scope>
    <source>
        <tissue>Prostate</tissue>
    </source>
</reference>
<evidence type="ECO:0000250" key="1">
    <source>
        <dbReference type="UniProtKB" id="P07997"/>
    </source>
</evidence>
<evidence type="ECO:0000250" key="2">
    <source>
        <dbReference type="UniProtKB" id="P13196"/>
    </source>
</evidence>
<evidence type="ECO:0000250" key="3">
    <source>
        <dbReference type="UniProtKB" id="P18079"/>
    </source>
</evidence>
<evidence type="ECO:0000250" key="4">
    <source>
        <dbReference type="UniProtKB" id="P22557"/>
    </source>
</evidence>
<evidence type="ECO:0000256" key="5">
    <source>
        <dbReference type="SAM" id="MobiDB-lite"/>
    </source>
</evidence>
<evidence type="ECO:0000269" key="6">
    <source>
    </source>
</evidence>
<evidence type="ECO:0000269" key="7">
    <source>
    </source>
</evidence>
<evidence type="ECO:0000305" key="8"/>
<sequence length="642" mass="71021">METVVRRCPFLSRVPQAFLQKAGKSLLFYAQNCPKMMEVGAKPAPRTVSTSAAQCQQVKETPPANEKEKTAKAAVQQAPDESQMAQTPDGTQLPPGHPSPSTSQSSGSKCPFLAAQLSQTGSSVFRKASLELQEDVQEMHAVRKEVAQSPVLPSLVNAKRDGEGPSPLLKNFQDIMRKQRPERVSHLLQDNLPKSVSTFQYDHFFEKKIDEKKNDHTYRVFKTVNRRAQIFPMADDYTDSLITKKQVSVWCSNDYLGMSRHPRVCGAVIETVKQHGAGAGGTRNISGTSKFHVELEQELADLHGKDAALLFSSCFVANDSTLFTLAKMMPGCEIYSDSGNHASMIQGIRNSRVPKYIFRHNDVNHLRELLQRSDPSVPKIVAFETVHSMDGAVCPLEELCDVAHEFGAITFVDEVHAVGLYGASGGGIGDRDGVMPKMDIISGTLGKAFGCVGGYIASTSLLIDTVRSYAAGFIFTTSLPPMLLAGALESVRILKSNEGRALRRQHQRNVKLMRQMLMDAGLPVIHCPSHIIPVRVADAAKNTEICDELMTRHNIYVQAINYPTVPRGEELLRIAPTPHHTPQMMNFFLEKLLLTWKRVGLELKPHSSAECNFCRRPLHFEVMSEREKAYFSGMSKMVSAQA</sequence>
<feature type="transit peptide" description="Mitochondrion" evidence="1">
    <location>
        <begin position="1"/>
        <end position="56"/>
    </location>
</feature>
<feature type="chain" id="PRO_0000001232" description="5-aminolevulinate synthase, non-specific, mitochondrial">
    <location>
        <begin position="57"/>
        <end position="642"/>
    </location>
</feature>
<feature type="region of interest" description="Disordered" evidence="5">
    <location>
        <begin position="51"/>
        <end position="109"/>
    </location>
</feature>
<feature type="compositionally biased region" description="Polar residues" evidence="5">
    <location>
        <begin position="79"/>
        <end position="90"/>
    </location>
</feature>
<feature type="compositionally biased region" description="Low complexity" evidence="5">
    <location>
        <begin position="99"/>
        <end position="108"/>
    </location>
</feature>
<feature type="active site" evidence="3">
    <location>
        <position position="447"/>
    </location>
</feature>
<feature type="binding site" evidence="3">
    <location>
        <position position="219"/>
    </location>
    <ligand>
        <name>substrate</name>
    </ligand>
</feature>
<feature type="binding site" evidence="3">
    <location>
        <position position="336"/>
    </location>
    <ligand>
        <name>substrate</name>
    </ligand>
</feature>
<feature type="binding site" evidence="3">
    <location>
        <position position="355"/>
    </location>
    <ligand>
        <name>substrate</name>
    </ligand>
</feature>
<feature type="binding site" description="in other chain" evidence="3">
    <location>
        <position position="388"/>
    </location>
    <ligand>
        <name>pyridoxal 5'-phosphate</name>
        <dbReference type="ChEBI" id="CHEBI:597326"/>
        <note>ligand shared between dimeric partners</note>
    </ligand>
</feature>
<feature type="binding site" description="in other chain" evidence="3">
    <location>
        <position position="416"/>
    </location>
    <ligand>
        <name>pyridoxal 5'-phosphate</name>
        <dbReference type="ChEBI" id="CHEBI:597326"/>
        <note>ligand shared between dimeric partners</note>
    </ligand>
</feature>
<feature type="binding site" description="in other chain" evidence="3">
    <location>
        <position position="444"/>
    </location>
    <ligand>
        <name>pyridoxal 5'-phosphate</name>
        <dbReference type="ChEBI" id="CHEBI:597326"/>
        <note>ligand shared between dimeric partners</note>
    </ligand>
</feature>
<feature type="binding site" evidence="3">
    <location>
        <position position="476"/>
    </location>
    <ligand>
        <name>pyridoxal 5'-phosphate</name>
        <dbReference type="ChEBI" id="CHEBI:597326"/>
        <note>ligand shared between dimeric partners</note>
    </ligand>
</feature>
<feature type="binding site" evidence="3">
    <location>
        <position position="477"/>
    </location>
    <ligand>
        <name>pyridoxal 5'-phosphate</name>
        <dbReference type="ChEBI" id="CHEBI:597326"/>
        <note>ligand shared between dimeric partners</note>
    </ligand>
</feature>
<feature type="binding site" evidence="3">
    <location>
        <position position="564"/>
    </location>
    <ligand>
        <name>substrate</name>
    </ligand>
</feature>
<feature type="modified residue" description="N6-(pyridoxal phosphate)lysine" evidence="3">
    <location>
        <position position="447"/>
    </location>
</feature>
<feature type="modified residue" description="Hydroxyproline" evidence="2">
    <location>
        <position position="578"/>
    </location>
</feature>
<feature type="sequence conflict" description="In Ref. 1; AAA40790." evidence="8" ref="1">
    <original>SQTGSSVFRKASLELQEDV</original>
    <variation>ARRAAASSARPVWSFRRTW</variation>
    <location>
        <begin position="118"/>
        <end position="136"/>
    </location>
</feature>
<feature type="sequence conflict" description="In Ref. 1; AAA40790." evidence="8" ref="1">
    <original>K</original>
    <variation>T</variation>
    <location>
        <position position="144"/>
    </location>
</feature>
<feature type="sequence conflict" description="In Ref. 1; AAA40790." evidence="8" ref="1">
    <original>S</original>
    <variation>V</variation>
    <location>
        <position position="195"/>
    </location>
</feature>
<feature type="sequence conflict" description="In Ref. 1; AAA40790." evidence="8" ref="1">
    <original>KK</original>
    <variation>NN</variation>
    <location>
        <begin position="244"/>
        <end position="245"/>
    </location>
</feature>
<feature type="sequence conflict" description="In Ref. 1; AAA40790." evidence="8" ref="1">
    <original>C</original>
    <variation>S</variation>
    <location>
        <position position="251"/>
    </location>
</feature>
<feature type="sequence conflict" description="In Ref. 2; AAA40724." evidence="8" ref="2">
    <original>V</original>
    <variation>L</variation>
    <location>
        <position position="377"/>
    </location>
</feature>
<feature type="sequence conflict" description="In Ref. 1; AAA40790." evidence="8" ref="1">
    <original>F</original>
    <variation>Y</variation>
    <location>
        <position position="587"/>
    </location>
</feature>
<comment type="function">
    <text evidence="2">Catalyzes the pyridoxal 5'-phosphate (PLP)-dependent condensation of succinyl-CoA and glycine to form aminolevulinic acid (ALA), with CoA and CO2 as by-products.</text>
</comment>
<comment type="catalytic activity">
    <reaction evidence="2">
        <text>succinyl-CoA + glycine + H(+) = 5-aminolevulinate + CO2 + CoA</text>
        <dbReference type="Rhea" id="RHEA:12921"/>
        <dbReference type="ChEBI" id="CHEBI:15378"/>
        <dbReference type="ChEBI" id="CHEBI:16526"/>
        <dbReference type="ChEBI" id="CHEBI:57287"/>
        <dbReference type="ChEBI" id="CHEBI:57292"/>
        <dbReference type="ChEBI" id="CHEBI:57305"/>
        <dbReference type="ChEBI" id="CHEBI:356416"/>
        <dbReference type="EC" id="2.3.1.37"/>
    </reaction>
    <physiologicalReaction direction="left-to-right" evidence="2">
        <dbReference type="Rhea" id="RHEA:12922"/>
    </physiologicalReaction>
</comment>
<comment type="cofactor">
    <cofactor evidence="2">
        <name>pyridoxal 5'-phosphate</name>
        <dbReference type="ChEBI" id="CHEBI:597326"/>
    </cofactor>
</comment>
<comment type="pathway">
    <text>Porphyrin-containing compound metabolism; protoporphyrin-IX biosynthesis; 5-aminolevulinate from glycine: step 1/1.</text>
</comment>
<comment type="subunit">
    <text evidence="2 4">Homodimer (By similarity). Interacts (hydroxylated form) with VHL (By similarity).</text>
</comment>
<comment type="subcellular location">
    <subcellularLocation>
        <location evidence="4">Mitochondrion inner membrane</location>
        <topology evidence="4">Peripheral membrane protein</topology>
    </subcellularLocation>
    <text evidence="4">Localizes to the matrix side of the mitochondrion inner membrane.</text>
</comment>
<comment type="tissue specificity">
    <text evidence="7">Expressed in the liver, kidney, brain and testis.</text>
</comment>
<comment type="induction">
    <text evidence="6 7">Down-regulated by hemin in the liver and by 6-amino-levulinate (or its methyl ester) in the liver, kidney, heart, testis and brain.</text>
</comment>
<comment type="PTM">
    <text evidence="2">In normoxia, is hydroxylated at Pro-578, promoting interaction with VHL, initiating ubiquitination and subsequent degradation via the proteasome.</text>
</comment>
<comment type="PTM">
    <text evidence="2">Ubiquitinated; in normoxia following hydroxylation and interaction with VHL, leading to its subsequent degradation via the proteasome.</text>
</comment>
<comment type="similarity">
    <text evidence="8">Belongs to the class-II pyridoxal-phosphate-dependent aminotransferase family.</text>
</comment>
<protein>
    <recommendedName>
        <fullName>5-aminolevulinate synthase, non-specific, mitochondrial</fullName>
        <shortName>ALAS-H</shortName>
        <ecNumber evidence="2">2.3.1.37</ecNumber>
    </recommendedName>
    <alternativeName>
        <fullName>5-aminolevulinic acid synthase 1</fullName>
    </alternativeName>
    <alternativeName>
        <fullName>Delta-ALA synthase 1</fullName>
    </alternativeName>
    <alternativeName>
        <fullName>Delta-aminolevulinate synthase 1</fullName>
    </alternativeName>
</protein>
<name>HEM1_RAT</name>
<organism>
    <name type="scientific">Rattus norvegicus</name>
    <name type="common">Rat</name>
    <dbReference type="NCBI Taxonomy" id="10116"/>
    <lineage>
        <taxon>Eukaryota</taxon>
        <taxon>Metazoa</taxon>
        <taxon>Chordata</taxon>
        <taxon>Craniata</taxon>
        <taxon>Vertebrata</taxon>
        <taxon>Euteleostomi</taxon>
        <taxon>Mammalia</taxon>
        <taxon>Eutheria</taxon>
        <taxon>Euarchontoglires</taxon>
        <taxon>Glires</taxon>
        <taxon>Rodentia</taxon>
        <taxon>Myomorpha</taxon>
        <taxon>Muroidea</taxon>
        <taxon>Muridae</taxon>
        <taxon>Murinae</taxon>
        <taxon>Rattus</taxon>
    </lineage>
</organism>
<gene>
    <name type="primary">Alas1</name>
</gene>
<proteinExistence type="evidence at transcript level"/>